<sequence length="101" mass="11045">MLTLAHYLVLGAILFAISIVGIFLNRRNVIIILMAIELMLLAVNTNFVAFSHYLGDVHGQIFVFFVLTVAAAEAAIGLAILVTLFRSLDTINVEDLDQLKG</sequence>
<keyword id="KW-0997">Cell inner membrane</keyword>
<keyword id="KW-1003">Cell membrane</keyword>
<keyword id="KW-0472">Membrane</keyword>
<keyword id="KW-0520">NAD</keyword>
<keyword id="KW-0874">Quinone</keyword>
<keyword id="KW-1185">Reference proteome</keyword>
<keyword id="KW-1278">Translocase</keyword>
<keyword id="KW-0812">Transmembrane</keyword>
<keyword id="KW-1133">Transmembrane helix</keyword>
<keyword id="KW-0813">Transport</keyword>
<keyword id="KW-0830">Ubiquinone</keyword>
<name>NUOK_PARXL</name>
<evidence type="ECO:0000255" key="1">
    <source>
        <dbReference type="HAMAP-Rule" id="MF_01456"/>
    </source>
</evidence>
<comment type="function">
    <text evidence="1">NDH-1 shuttles electrons from NADH, via FMN and iron-sulfur (Fe-S) centers, to quinones in the respiratory chain. The immediate electron acceptor for the enzyme in this species is believed to be ubiquinone. Couples the redox reaction to proton translocation (for every two electrons transferred, four hydrogen ions are translocated across the cytoplasmic membrane), and thus conserves the redox energy in a proton gradient.</text>
</comment>
<comment type="catalytic activity">
    <reaction evidence="1">
        <text>a quinone + NADH + 5 H(+)(in) = a quinol + NAD(+) + 4 H(+)(out)</text>
        <dbReference type="Rhea" id="RHEA:57888"/>
        <dbReference type="ChEBI" id="CHEBI:15378"/>
        <dbReference type="ChEBI" id="CHEBI:24646"/>
        <dbReference type="ChEBI" id="CHEBI:57540"/>
        <dbReference type="ChEBI" id="CHEBI:57945"/>
        <dbReference type="ChEBI" id="CHEBI:132124"/>
    </reaction>
</comment>
<comment type="subunit">
    <text evidence="1">NDH-1 is composed of 14 different subunits. Subunits NuoA, H, J, K, L, M, N constitute the membrane sector of the complex.</text>
</comment>
<comment type="subcellular location">
    <subcellularLocation>
        <location evidence="1">Cell inner membrane</location>
        <topology evidence="1">Multi-pass membrane protein</topology>
    </subcellularLocation>
</comment>
<comment type="similarity">
    <text evidence="1">Belongs to the complex I subunit 4L family.</text>
</comment>
<dbReference type="EC" id="7.1.1.-" evidence="1"/>
<dbReference type="EMBL" id="CP000270">
    <property type="protein sequence ID" value="ABE29776.1"/>
    <property type="molecule type" value="Genomic_DNA"/>
</dbReference>
<dbReference type="RefSeq" id="WP_006052894.1">
    <property type="nucleotide sequence ID" value="NZ_CP008760.1"/>
</dbReference>
<dbReference type="SMR" id="Q142G3"/>
<dbReference type="STRING" id="266265.Bxe_A3204"/>
<dbReference type="GeneID" id="97309964"/>
<dbReference type="KEGG" id="bxb:DR64_906"/>
<dbReference type="KEGG" id="bxe:Bxe_A3204"/>
<dbReference type="eggNOG" id="COG0713">
    <property type="taxonomic scope" value="Bacteria"/>
</dbReference>
<dbReference type="Proteomes" id="UP000001817">
    <property type="component" value="Chromosome 1"/>
</dbReference>
<dbReference type="GO" id="GO:0030964">
    <property type="term" value="C:NADH dehydrogenase complex"/>
    <property type="evidence" value="ECO:0007669"/>
    <property type="project" value="TreeGrafter"/>
</dbReference>
<dbReference type="GO" id="GO:0005886">
    <property type="term" value="C:plasma membrane"/>
    <property type="evidence" value="ECO:0007669"/>
    <property type="project" value="UniProtKB-SubCell"/>
</dbReference>
<dbReference type="GO" id="GO:0050136">
    <property type="term" value="F:NADH:ubiquinone reductase (non-electrogenic) activity"/>
    <property type="evidence" value="ECO:0007669"/>
    <property type="project" value="UniProtKB-UniRule"/>
</dbReference>
<dbReference type="GO" id="GO:0048038">
    <property type="term" value="F:quinone binding"/>
    <property type="evidence" value="ECO:0007669"/>
    <property type="project" value="UniProtKB-KW"/>
</dbReference>
<dbReference type="GO" id="GO:0042773">
    <property type="term" value="P:ATP synthesis coupled electron transport"/>
    <property type="evidence" value="ECO:0007669"/>
    <property type="project" value="InterPro"/>
</dbReference>
<dbReference type="FunFam" id="1.10.287.3510:FF:000001">
    <property type="entry name" value="NADH-quinone oxidoreductase subunit K"/>
    <property type="match status" value="1"/>
</dbReference>
<dbReference type="Gene3D" id="1.10.287.3510">
    <property type="match status" value="1"/>
</dbReference>
<dbReference type="HAMAP" id="MF_01456">
    <property type="entry name" value="NDH1_NuoK"/>
    <property type="match status" value="1"/>
</dbReference>
<dbReference type="InterPro" id="IPR001133">
    <property type="entry name" value="NADH_UbQ_OxRdtase_chain4L/K"/>
</dbReference>
<dbReference type="InterPro" id="IPR039428">
    <property type="entry name" value="NUOK/Mnh_C1-like"/>
</dbReference>
<dbReference type="NCBIfam" id="NF004320">
    <property type="entry name" value="PRK05715.1-2"/>
    <property type="match status" value="1"/>
</dbReference>
<dbReference type="NCBIfam" id="NF004321">
    <property type="entry name" value="PRK05715.1-3"/>
    <property type="match status" value="1"/>
</dbReference>
<dbReference type="NCBIfam" id="NF004323">
    <property type="entry name" value="PRK05715.1-5"/>
    <property type="match status" value="1"/>
</dbReference>
<dbReference type="PANTHER" id="PTHR11434:SF21">
    <property type="entry name" value="NADH DEHYDROGENASE SUBUNIT 4L-RELATED"/>
    <property type="match status" value="1"/>
</dbReference>
<dbReference type="PANTHER" id="PTHR11434">
    <property type="entry name" value="NADH-UBIQUINONE OXIDOREDUCTASE SUBUNIT ND4L"/>
    <property type="match status" value="1"/>
</dbReference>
<dbReference type="Pfam" id="PF00420">
    <property type="entry name" value="Oxidored_q2"/>
    <property type="match status" value="1"/>
</dbReference>
<organism>
    <name type="scientific">Paraburkholderia xenovorans (strain LB400)</name>
    <dbReference type="NCBI Taxonomy" id="266265"/>
    <lineage>
        <taxon>Bacteria</taxon>
        <taxon>Pseudomonadati</taxon>
        <taxon>Pseudomonadota</taxon>
        <taxon>Betaproteobacteria</taxon>
        <taxon>Burkholderiales</taxon>
        <taxon>Burkholderiaceae</taxon>
        <taxon>Paraburkholderia</taxon>
    </lineage>
</organism>
<protein>
    <recommendedName>
        <fullName evidence="1">NADH-quinone oxidoreductase subunit K</fullName>
        <ecNumber evidence="1">7.1.1.-</ecNumber>
    </recommendedName>
    <alternativeName>
        <fullName evidence="1">NADH dehydrogenase I subunit K</fullName>
    </alternativeName>
    <alternativeName>
        <fullName evidence="1">NDH-1 subunit K</fullName>
    </alternativeName>
</protein>
<gene>
    <name evidence="1" type="primary">nuoK</name>
    <name type="ordered locus">Bxeno_A1238</name>
    <name type="ORF">Bxe_A3204</name>
</gene>
<feature type="chain" id="PRO_0000390002" description="NADH-quinone oxidoreductase subunit K">
    <location>
        <begin position="1"/>
        <end position="101"/>
    </location>
</feature>
<feature type="transmembrane region" description="Helical" evidence="1">
    <location>
        <begin position="4"/>
        <end position="24"/>
    </location>
</feature>
<feature type="transmembrane region" description="Helical" evidence="1">
    <location>
        <begin position="30"/>
        <end position="50"/>
    </location>
</feature>
<feature type="transmembrane region" description="Helical" evidence="1">
    <location>
        <begin position="61"/>
        <end position="81"/>
    </location>
</feature>
<reference key="1">
    <citation type="journal article" date="2006" name="Proc. Natl. Acad. Sci. U.S.A.">
        <title>Burkholderia xenovorans LB400 harbors a multi-replicon, 9.73-Mbp genome shaped for versatility.</title>
        <authorList>
            <person name="Chain P.S.G."/>
            <person name="Denef V.J."/>
            <person name="Konstantinidis K.T."/>
            <person name="Vergez L.M."/>
            <person name="Agullo L."/>
            <person name="Reyes V.L."/>
            <person name="Hauser L."/>
            <person name="Cordova M."/>
            <person name="Gomez L."/>
            <person name="Gonzalez M."/>
            <person name="Land M."/>
            <person name="Lao V."/>
            <person name="Larimer F."/>
            <person name="LiPuma J.J."/>
            <person name="Mahenthiralingam E."/>
            <person name="Malfatti S.A."/>
            <person name="Marx C.J."/>
            <person name="Parnell J.J."/>
            <person name="Ramette A."/>
            <person name="Richardson P."/>
            <person name="Seeger M."/>
            <person name="Smith D."/>
            <person name="Spilker T."/>
            <person name="Sul W.J."/>
            <person name="Tsoi T.V."/>
            <person name="Ulrich L.E."/>
            <person name="Zhulin I.B."/>
            <person name="Tiedje J.M."/>
        </authorList>
    </citation>
    <scope>NUCLEOTIDE SEQUENCE [LARGE SCALE GENOMIC DNA]</scope>
    <source>
        <strain>LB400</strain>
    </source>
</reference>
<accession>Q142G3</accession>
<proteinExistence type="inferred from homology"/>